<reference key="1">
    <citation type="journal article" date="2006" name="Proc. Natl. Acad. Sci. U.S.A.">
        <title>Molecular genetic anatomy of inter- and intraserotype variation in the human bacterial pathogen group A Streptococcus.</title>
        <authorList>
            <person name="Beres S.B."/>
            <person name="Richter E.W."/>
            <person name="Nagiec M.J."/>
            <person name="Sumby P."/>
            <person name="Porcella S.F."/>
            <person name="DeLeo F.R."/>
            <person name="Musser J.M."/>
        </authorList>
    </citation>
    <scope>NUCLEOTIDE SEQUENCE [LARGE SCALE GENOMIC DNA]</scope>
    <source>
        <strain>MGAS2096</strain>
    </source>
</reference>
<gene>
    <name evidence="1" type="primary">clpX</name>
    <name type="ordered locus">MGAS2096_Spy0763</name>
</gene>
<proteinExistence type="inferred from homology"/>
<comment type="function">
    <text evidence="1">ATP-dependent specificity component of the Clp protease. It directs the protease to specific substrates. Can perform chaperone functions in the absence of ClpP.</text>
</comment>
<comment type="subunit">
    <text evidence="1">Component of the ClpX-ClpP complex. Forms a hexameric ring that, in the presence of ATP, binds to fourteen ClpP subunits assembled into a disk-like structure with a central cavity, resembling the structure of eukaryotic proteasomes.</text>
</comment>
<comment type="similarity">
    <text evidence="1">Belongs to the ClpX chaperone family.</text>
</comment>
<dbReference type="EMBL" id="CP000261">
    <property type="protein sequence ID" value="ABF35815.1"/>
    <property type="molecule type" value="Genomic_DNA"/>
</dbReference>
<dbReference type="SMR" id="Q1JC93"/>
<dbReference type="KEGG" id="spj:MGAS2096_Spy0763"/>
<dbReference type="HOGENOM" id="CLU_014218_8_2_9"/>
<dbReference type="GO" id="GO:0009376">
    <property type="term" value="C:HslUV protease complex"/>
    <property type="evidence" value="ECO:0007669"/>
    <property type="project" value="TreeGrafter"/>
</dbReference>
<dbReference type="GO" id="GO:0005524">
    <property type="term" value="F:ATP binding"/>
    <property type="evidence" value="ECO:0007669"/>
    <property type="project" value="UniProtKB-UniRule"/>
</dbReference>
<dbReference type="GO" id="GO:0016887">
    <property type="term" value="F:ATP hydrolysis activity"/>
    <property type="evidence" value="ECO:0007669"/>
    <property type="project" value="InterPro"/>
</dbReference>
<dbReference type="GO" id="GO:0140662">
    <property type="term" value="F:ATP-dependent protein folding chaperone"/>
    <property type="evidence" value="ECO:0007669"/>
    <property type="project" value="InterPro"/>
</dbReference>
<dbReference type="GO" id="GO:0046983">
    <property type="term" value="F:protein dimerization activity"/>
    <property type="evidence" value="ECO:0007669"/>
    <property type="project" value="InterPro"/>
</dbReference>
<dbReference type="GO" id="GO:0051082">
    <property type="term" value="F:unfolded protein binding"/>
    <property type="evidence" value="ECO:0007669"/>
    <property type="project" value="UniProtKB-UniRule"/>
</dbReference>
<dbReference type="GO" id="GO:0008270">
    <property type="term" value="F:zinc ion binding"/>
    <property type="evidence" value="ECO:0007669"/>
    <property type="project" value="InterPro"/>
</dbReference>
<dbReference type="GO" id="GO:0051301">
    <property type="term" value="P:cell division"/>
    <property type="evidence" value="ECO:0007669"/>
    <property type="project" value="TreeGrafter"/>
</dbReference>
<dbReference type="GO" id="GO:0051603">
    <property type="term" value="P:proteolysis involved in protein catabolic process"/>
    <property type="evidence" value="ECO:0007669"/>
    <property type="project" value="TreeGrafter"/>
</dbReference>
<dbReference type="CDD" id="cd19497">
    <property type="entry name" value="RecA-like_ClpX"/>
    <property type="match status" value="1"/>
</dbReference>
<dbReference type="FunFam" id="1.10.8.60:FF:000002">
    <property type="entry name" value="ATP-dependent Clp protease ATP-binding subunit ClpX"/>
    <property type="match status" value="1"/>
</dbReference>
<dbReference type="FunFam" id="3.40.50.300:FF:000005">
    <property type="entry name" value="ATP-dependent Clp protease ATP-binding subunit ClpX"/>
    <property type="match status" value="1"/>
</dbReference>
<dbReference type="Gene3D" id="1.10.8.60">
    <property type="match status" value="1"/>
</dbReference>
<dbReference type="Gene3D" id="6.20.220.10">
    <property type="entry name" value="ClpX chaperone, C4-type zinc finger domain"/>
    <property type="match status" value="1"/>
</dbReference>
<dbReference type="Gene3D" id="3.40.50.300">
    <property type="entry name" value="P-loop containing nucleotide triphosphate hydrolases"/>
    <property type="match status" value="1"/>
</dbReference>
<dbReference type="HAMAP" id="MF_00175">
    <property type="entry name" value="ClpX"/>
    <property type="match status" value="1"/>
</dbReference>
<dbReference type="InterPro" id="IPR003593">
    <property type="entry name" value="AAA+_ATPase"/>
</dbReference>
<dbReference type="InterPro" id="IPR050052">
    <property type="entry name" value="ATP-dep_Clp_protease_ClpX"/>
</dbReference>
<dbReference type="InterPro" id="IPR003959">
    <property type="entry name" value="ATPase_AAA_core"/>
</dbReference>
<dbReference type="InterPro" id="IPR019489">
    <property type="entry name" value="Clp_ATPase_C"/>
</dbReference>
<dbReference type="InterPro" id="IPR004487">
    <property type="entry name" value="Clp_protease_ATP-bd_su_ClpX"/>
</dbReference>
<dbReference type="InterPro" id="IPR046425">
    <property type="entry name" value="ClpX_bact"/>
</dbReference>
<dbReference type="InterPro" id="IPR027417">
    <property type="entry name" value="P-loop_NTPase"/>
</dbReference>
<dbReference type="InterPro" id="IPR010603">
    <property type="entry name" value="Znf_CppX_C4"/>
</dbReference>
<dbReference type="InterPro" id="IPR038366">
    <property type="entry name" value="Znf_CppX_C4_sf"/>
</dbReference>
<dbReference type="NCBIfam" id="TIGR00382">
    <property type="entry name" value="clpX"/>
    <property type="match status" value="1"/>
</dbReference>
<dbReference type="NCBIfam" id="NF003745">
    <property type="entry name" value="PRK05342.1"/>
    <property type="match status" value="1"/>
</dbReference>
<dbReference type="PANTHER" id="PTHR48102:SF7">
    <property type="entry name" value="ATP-DEPENDENT CLP PROTEASE ATP-BINDING SUBUNIT CLPX-LIKE, MITOCHONDRIAL"/>
    <property type="match status" value="1"/>
</dbReference>
<dbReference type="PANTHER" id="PTHR48102">
    <property type="entry name" value="ATP-DEPENDENT CLP PROTEASE ATP-BINDING SUBUNIT CLPX-LIKE, MITOCHONDRIAL-RELATED"/>
    <property type="match status" value="1"/>
</dbReference>
<dbReference type="Pfam" id="PF07724">
    <property type="entry name" value="AAA_2"/>
    <property type="match status" value="1"/>
</dbReference>
<dbReference type="Pfam" id="PF10431">
    <property type="entry name" value="ClpB_D2-small"/>
    <property type="match status" value="1"/>
</dbReference>
<dbReference type="Pfam" id="PF06689">
    <property type="entry name" value="zf-C4_ClpX"/>
    <property type="match status" value="1"/>
</dbReference>
<dbReference type="SMART" id="SM00382">
    <property type="entry name" value="AAA"/>
    <property type="match status" value="1"/>
</dbReference>
<dbReference type="SMART" id="SM01086">
    <property type="entry name" value="ClpB_D2-small"/>
    <property type="match status" value="1"/>
</dbReference>
<dbReference type="SMART" id="SM00994">
    <property type="entry name" value="zf-C4_ClpX"/>
    <property type="match status" value="1"/>
</dbReference>
<dbReference type="SUPFAM" id="SSF57716">
    <property type="entry name" value="Glucocorticoid receptor-like (DNA-binding domain)"/>
    <property type="match status" value="1"/>
</dbReference>
<dbReference type="SUPFAM" id="SSF52540">
    <property type="entry name" value="P-loop containing nucleoside triphosphate hydrolases"/>
    <property type="match status" value="1"/>
</dbReference>
<dbReference type="PROSITE" id="PS51902">
    <property type="entry name" value="CLPX_ZB"/>
    <property type="match status" value="1"/>
</dbReference>
<sequence>MAGSRTNDIKVYCSFCGKSQDDVKKIIAGNNVFICNECVALSQEIIKEELSEEVLADLTEVPKPKELLDVLNQYVVGQDRAKRALSVAVYNHYKRVSFTESRDDDDVDLQKSNILMIGPTGSGKTFLAQTLAKSLNVPFAIADATSLTEAGYVGEDVENILLKLIQAADYNVERAERGIIYVDEIDKIAKKGENVSITRDVSGEGVQQALLKIIEGTVASVPPQGGRKHPNQEMIQIDTKNILFIVGGAFDGIEEIVKQRLGEKVIGFGQNSRKIDDNASYMQEIISEDIQKFGLIPEFIGRLPVVAALEQLKTSDLIRILTEPRNALVKQYQALLSYDGVELEFDKAALEAIATKAIERKTGARGLRSIIEETMLDIMFEIPSQEDVTKVRITKAAVEGKSKPVLETA</sequence>
<accession>Q1JC93</accession>
<protein>
    <recommendedName>
        <fullName evidence="1">ATP-dependent Clp protease ATP-binding subunit ClpX</fullName>
    </recommendedName>
</protein>
<evidence type="ECO:0000255" key="1">
    <source>
        <dbReference type="HAMAP-Rule" id="MF_00175"/>
    </source>
</evidence>
<evidence type="ECO:0000255" key="2">
    <source>
        <dbReference type="PROSITE-ProRule" id="PRU01250"/>
    </source>
</evidence>
<keyword id="KW-0067">ATP-binding</keyword>
<keyword id="KW-0143">Chaperone</keyword>
<keyword id="KW-0479">Metal-binding</keyword>
<keyword id="KW-0547">Nucleotide-binding</keyword>
<keyword id="KW-0862">Zinc</keyword>
<feature type="chain" id="PRO_1000024678" description="ATP-dependent Clp protease ATP-binding subunit ClpX">
    <location>
        <begin position="1"/>
        <end position="409"/>
    </location>
</feature>
<feature type="domain" description="ClpX-type ZB" evidence="2">
    <location>
        <begin position="1"/>
        <end position="54"/>
    </location>
</feature>
<feature type="binding site" evidence="2">
    <location>
        <position position="13"/>
    </location>
    <ligand>
        <name>Zn(2+)</name>
        <dbReference type="ChEBI" id="CHEBI:29105"/>
    </ligand>
</feature>
<feature type="binding site" evidence="2">
    <location>
        <position position="16"/>
    </location>
    <ligand>
        <name>Zn(2+)</name>
        <dbReference type="ChEBI" id="CHEBI:29105"/>
    </ligand>
</feature>
<feature type="binding site" evidence="2">
    <location>
        <position position="35"/>
    </location>
    <ligand>
        <name>Zn(2+)</name>
        <dbReference type="ChEBI" id="CHEBI:29105"/>
    </ligand>
</feature>
<feature type="binding site" evidence="2">
    <location>
        <position position="38"/>
    </location>
    <ligand>
        <name>Zn(2+)</name>
        <dbReference type="ChEBI" id="CHEBI:29105"/>
    </ligand>
</feature>
<feature type="binding site" evidence="1">
    <location>
        <begin position="119"/>
        <end position="126"/>
    </location>
    <ligand>
        <name>ATP</name>
        <dbReference type="ChEBI" id="CHEBI:30616"/>
    </ligand>
</feature>
<name>CLPX_STRPB</name>
<organism>
    <name type="scientific">Streptococcus pyogenes serotype M12 (strain MGAS2096)</name>
    <dbReference type="NCBI Taxonomy" id="370553"/>
    <lineage>
        <taxon>Bacteria</taxon>
        <taxon>Bacillati</taxon>
        <taxon>Bacillota</taxon>
        <taxon>Bacilli</taxon>
        <taxon>Lactobacillales</taxon>
        <taxon>Streptococcaceae</taxon>
        <taxon>Streptococcus</taxon>
    </lineage>
</organism>